<proteinExistence type="evidence at protein level"/>
<organism>
    <name type="scientific">Salmonella typhimurium (strain LT2 / SGSC1412 / ATCC 700720)</name>
    <dbReference type="NCBI Taxonomy" id="99287"/>
    <lineage>
        <taxon>Bacteria</taxon>
        <taxon>Pseudomonadati</taxon>
        <taxon>Pseudomonadota</taxon>
        <taxon>Gammaproteobacteria</taxon>
        <taxon>Enterobacterales</taxon>
        <taxon>Enterobacteriaceae</taxon>
        <taxon>Salmonella</taxon>
    </lineage>
</organism>
<sequence length="752" mass="84038">MSDMAERLALHEFTENAYLNYSMYVIMDRALPFIGDGLKPVQRRIVYAMSELGLNATAKFKKSARTVGDVLGKYHPHGDSACYEAMVLMAQPFSYRYPLVDGQGNWGAPDDPKSFAAMRYTESRLSKYAELLLSELGQGTADWVPNFDGTMQEPKMLPARLPNILLNGTTGIAVGMATDIPPHNLREVAKAAITLIEQPKTTLDQLLDIVQGPDYPTEAEIITPRAEIRKIYENGRGSVRMRAVWTKEDGAVVISALPHQVSGAKVLEQIAAQMRNKKLPMVDDLRDESDHENPTRLVIVPRSNRVDMEQVMNHLFATTDLEKSYRINLNMIGLDGRPAVKNLLEILTEWLAFRRDTVRRRLNYRLEKVLKRLHILEGLLVAFLNIDEVIEIIRSEDEPKPALMSRFGISETQAEAILELKLRHLAKLEEMKIRGEQDELEKERDQLQGILASERKMNTLLKKELQADADAYGDDRRSPLREREEAKAMSEHDMLPSEPVTIVLSQMGWVRSAKGHDIDAPGLNYKAGDSFKAAVKGKSNQPVVFIDTTGRSYAIDPITLPSARGQGEPLTGKLTLPPGATVEHMLMEGDDQKLLMASDAGYGFVCTFNDLVARNRAGKTLITLPENAHVMPPLVIEDEHDMLLAITQAGRMLMFPVDSLPQLSKGKGNKIINIPSAEAAKGDDGLAHLYVLPPQSTLTIHVGKRKIKLRPEELQKVVGERGRRGTLMRGLQRIDRIEIDSPHRVSHGDSEE</sequence>
<keyword id="KW-1003">Cell membrane</keyword>
<keyword id="KW-0238">DNA-binding</keyword>
<keyword id="KW-0413">Isomerase</keyword>
<keyword id="KW-0472">Membrane</keyword>
<keyword id="KW-1185">Reference proteome</keyword>
<keyword id="KW-0799">Topoisomerase</keyword>
<comment type="function">
    <text evidence="4">Topoisomerase IV is essential for chromosome segregation. It relaxes supercoiled DNA (PubMed:22916023). Performs the decatenation events required during the replication of a circular DNA molecule.</text>
</comment>
<comment type="catalytic activity">
    <reaction evidence="1">
        <text>ATP-dependent breakage, passage and rejoining of double-stranded DNA.</text>
        <dbReference type="EC" id="5.6.2.2"/>
    </reaction>
</comment>
<comment type="subunit">
    <text evidence="1">Heterotetramer composed of ParC and ParE.</text>
</comment>
<comment type="subcellular location">
    <subcellularLocation>
        <location evidence="1">Cell membrane</location>
        <topology evidence="1">Peripheral membrane protein</topology>
    </subcellularLocation>
</comment>
<comment type="similarity">
    <text evidence="1">Belongs to the type II topoisomerase GyrA/ParC subunit family. ParC type 1 subfamily.</text>
</comment>
<gene>
    <name evidence="1" type="primary">parC</name>
    <name type="ordered locus">STM3174</name>
</gene>
<name>PARC_SALTY</name>
<feature type="chain" id="PRO_0000145407" description="DNA topoisomerase 4 subunit A">
    <location>
        <begin position="1"/>
        <end position="752"/>
    </location>
</feature>
<feature type="domain" description="Topo IIA-type catalytic" evidence="2">
    <location>
        <begin position="31"/>
        <end position="494"/>
    </location>
</feature>
<feature type="region of interest" description="Disordered" evidence="3">
    <location>
        <begin position="472"/>
        <end position="492"/>
    </location>
</feature>
<feature type="compositionally biased region" description="Basic and acidic residues" evidence="3">
    <location>
        <begin position="473"/>
        <end position="492"/>
    </location>
</feature>
<feature type="active site" description="O-(5'-phospho-DNA)-tyrosine intermediate" evidence="1">
    <location>
        <position position="120"/>
    </location>
</feature>
<feature type="site" description="Interaction with DNA" evidence="1">
    <location>
        <position position="39"/>
    </location>
</feature>
<feature type="site" description="Interaction with DNA" evidence="1">
    <location>
        <position position="75"/>
    </location>
</feature>
<feature type="site" description="Interaction with DNA" evidence="1">
    <location>
        <position position="77"/>
    </location>
</feature>
<feature type="site" description="Transition state stabilizer" evidence="1">
    <location>
        <position position="119"/>
    </location>
</feature>
<feature type="mutagenesis site" description="In parC281TS; a temperature-sensitive mutant, no change in growth rate or negative supercoiling at permissive temperature." evidence="4">
    <original>P</original>
    <variation>L</variation>
    <location>
        <position position="557"/>
    </location>
</feature>
<feature type="sequence conflict" description="In Ref. 1; AAA27180." evidence="5" ref="1">
    <original>MR</original>
    <variation>IG</variation>
    <location>
        <begin position="241"/>
        <end position="242"/>
    </location>
</feature>
<protein>
    <recommendedName>
        <fullName evidence="1">DNA topoisomerase 4 subunit A</fullName>
        <ecNumber evidence="1">5.6.2.2</ecNumber>
    </recommendedName>
    <alternativeName>
        <fullName evidence="1">Topoisomerase IV subunit A</fullName>
    </alternativeName>
</protein>
<accession>P26973</accession>
<evidence type="ECO:0000255" key="1">
    <source>
        <dbReference type="HAMAP-Rule" id="MF_00936"/>
    </source>
</evidence>
<evidence type="ECO:0000255" key="2">
    <source>
        <dbReference type="PROSITE-ProRule" id="PRU01384"/>
    </source>
</evidence>
<evidence type="ECO:0000256" key="3">
    <source>
        <dbReference type="SAM" id="MobiDB-lite"/>
    </source>
</evidence>
<evidence type="ECO:0000269" key="4">
    <source>
    </source>
</evidence>
<evidence type="ECO:0000305" key="5"/>
<reference key="1">
    <citation type="journal article" date="1991" name="New Biol.">
        <title>A cluster of genes that affects nucleoid segregation in Salmonella typhimurium.</title>
        <authorList>
            <person name="Luttinger A.L."/>
            <person name="Springer A.L."/>
            <person name="Schmid M.B."/>
        </authorList>
    </citation>
    <scope>NUCLEOTIDE SEQUENCE [GENOMIC DNA]</scope>
    <source>
        <strain>LT2</strain>
    </source>
</reference>
<reference key="2">
    <citation type="journal article" date="2001" name="Nature">
        <title>Complete genome sequence of Salmonella enterica serovar Typhimurium LT2.</title>
        <authorList>
            <person name="McClelland M."/>
            <person name="Sanderson K.E."/>
            <person name="Spieth J."/>
            <person name="Clifton S.W."/>
            <person name="Latreille P."/>
            <person name="Courtney L."/>
            <person name="Porwollik S."/>
            <person name="Ali J."/>
            <person name="Dante M."/>
            <person name="Du F."/>
            <person name="Hou S."/>
            <person name="Layman D."/>
            <person name="Leonard S."/>
            <person name="Nguyen C."/>
            <person name="Scott K."/>
            <person name="Holmes A."/>
            <person name="Grewal N."/>
            <person name="Mulvaney E."/>
            <person name="Ryan E."/>
            <person name="Sun H."/>
            <person name="Florea L."/>
            <person name="Miller W."/>
            <person name="Stoneking T."/>
            <person name="Nhan M."/>
            <person name="Waterston R."/>
            <person name="Wilson R.K."/>
        </authorList>
    </citation>
    <scope>NUCLEOTIDE SEQUENCE [LARGE SCALE GENOMIC DNA]</scope>
    <source>
        <strain>LT2 / SGSC1412 / ATCC 700720</strain>
    </source>
</reference>
<reference key="3">
    <citation type="journal article" date="2012" name="PLoS Genet.">
        <title>Rates of gyrase supercoiling and transcription elongation control supercoil density in a bacterial chromosome.</title>
        <authorList>
            <person name="Rovinskiy N."/>
            <person name="Agbleke A.A."/>
            <person name="Chesnokova O."/>
            <person name="Pang Z."/>
            <person name="Higgins N.P."/>
        </authorList>
    </citation>
    <scope>FUNCTION</scope>
    <scope>MUTAGENESIS OF PRO-557</scope>
    <source>
        <strain>LT2 / SGSC1412 / ATCC 700720</strain>
    </source>
</reference>
<dbReference type="EC" id="5.6.2.2" evidence="1"/>
<dbReference type="EMBL" id="M68936">
    <property type="protein sequence ID" value="AAA27180.1"/>
    <property type="molecule type" value="Genomic_DNA"/>
</dbReference>
<dbReference type="EMBL" id="AE006468">
    <property type="protein sequence ID" value="AAL22048.1"/>
    <property type="molecule type" value="Genomic_DNA"/>
</dbReference>
<dbReference type="PIR" id="A45582">
    <property type="entry name" value="A45582"/>
</dbReference>
<dbReference type="RefSeq" id="NP_462089.1">
    <property type="nucleotide sequence ID" value="NC_003197.2"/>
</dbReference>
<dbReference type="RefSeq" id="WP_001281908.1">
    <property type="nucleotide sequence ID" value="NC_003197.2"/>
</dbReference>
<dbReference type="SMR" id="P26973"/>
<dbReference type="STRING" id="99287.STM3174"/>
<dbReference type="PaxDb" id="99287-STM3174"/>
<dbReference type="GeneID" id="1254697"/>
<dbReference type="KEGG" id="stm:STM3174"/>
<dbReference type="PATRIC" id="fig|99287.12.peg.3365"/>
<dbReference type="HOGENOM" id="CLU_002977_6_1_6"/>
<dbReference type="OMA" id="MNVPDGH"/>
<dbReference type="PhylomeDB" id="P26973"/>
<dbReference type="BioCyc" id="SENT99287:STM3174-MONOMER"/>
<dbReference type="Proteomes" id="UP000001014">
    <property type="component" value="Chromosome"/>
</dbReference>
<dbReference type="GO" id="GO:0005694">
    <property type="term" value="C:chromosome"/>
    <property type="evidence" value="ECO:0007669"/>
    <property type="project" value="InterPro"/>
</dbReference>
<dbReference type="GO" id="GO:0005737">
    <property type="term" value="C:cytoplasm"/>
    <property type="evidence" value="ECO:0000318"/>
    <property type="project" value="GO_Central"/>
</dbReference>
<dbReference type="GO" id="GO:0009330">
    <property type="term" value="C:DNA topoisomerase type II (double strand cut, ATP-hydrolyzing) complex"/>
    <property type="evidence" value="ECO:0000318"/>
    <property type="project" value="GO_Central"/>
</dbReference>
<dbReference type="GO" id="GO:0019897">
    <property type="term" value="C:extrinsic component of plasma membrane"/>
    <property type="evidence" value="ECO:0007669"/>
    <property type="project" value="UniProtKB-UniRule"/>
</dbReference>
<dbReference type="GO" id="GO:0005524">
    <property type="term" value="F:ATP binding"/>
    <property type="evidence" value="ECO:0000318"/>
    <property type="project" value="GO_Central"/>
</dbReference>
<dbReference type="GO" id="GO:0003677">
    <property type="term" value="F:DNA binding"/>
    <property type="evidence" value="ECO:0000318"/>
    <property type="project" value="GO_Central"/>
</dbReference>
<dbReference type="GO" id="GO:0003918">
    <property type="term" value="F:DNA topoisomerase type II (double strand cut, ATP-hydrolyzing) activity"/>
    <property type="evidence" value="ECO:0007669"/>
    <property type="project" value="UniProtKB-UniRule"/>
</dbReference>
<dbReference type="GO" id="GO:0007059">
    <property type="term" value="P:chromosome segregation"/>
    <property type="evidence" value="ECO:0000318"/>
    <property type="project" value="GO_Central"/>
</dbReference>
<dbReference type="GO" id="GO:0006265">
    <property type="term" value="P:DNA topological change"/>
    <property type="evidence" value="ECO:0000318"/>
    <property type="project" value="GO_Central"/>
</dbReference>
<dbReference type="CDD" id="cd00187">
    <property type="entry name" value="TOP4c"/>
    <property type="match status" value="1"/>
</dbReference>
<dbReference type="FunFam" id="1.10.268.10:FF:000001">
    <property type="entry name" value="DNA gyrase subunit A"/>
    <property type="match status" value="1"/>
</dbReference>
<dbReference type="FunFam" id="2.120.10.90:FF:000003">
    <property type="entry name" value="DNA topoisomerase 4 subunit A"/>
    <property type="match status" value="1"/>
</dbReference>
<dbReference type="FunFam" id="3.30.1360.40:FF:000005">
    <property type="entry name" value="DNA topoisomerase 4 subunit A"/>
    <property type="match status" value="1"/>
</dbReference>
<dbReference type="Gene3D" id="3.30.1360.40">
    <property type="match status" value="1"/>
</dbReference>
<dbReference type="Gene3D" id="2.120.10.90">
    <property type="entry name" value="DNA gyrase/topoisomerase IV, subunit A, C-terminal"/>
    <property type="match status" value="1"/>
</dbReference>
<dbReference type="Gene3D" id="3.90.199.10">
    <property type="entry name" value="Topoisomerase II, domain 5"/>
    <property type="match status" value="1"/>
</dbReference>
<dbReference type="Gene3D" id="1.10.268.10">
    <property type="entry name" value="Topoisomerase, domain 3"/>
    <property type="match status" value="1"/>
</dbReference>
<dbReference type="HAMAP" id="MF_00936">
    <property type="entry name" value="ParC_type1"/>
    <property type="match status" value="1"/>
</dbReference>
<dbReference type="InterPro" id="IPR006691">
    <property type="entry name" value="GyrA/parC_rep"/>
</dbReference>
<dbReference type="InterPro" id="IPR035516">
    <property type="entry name" value="Gyrase/topoIV_suA_C"/>
</dbReference>
<dbReference type="InterPro" id="IPR013760">
    <property type="entry name" value="Topo_IIA-like_dom_sf"/>
</dbReference>
<dbReference type="InterPro" id="IPR013758">
    <property type="entry name" value="Topo_IIA_A/C_ab"/>
</dbReference>
<dbReference type="InterPro" id="IPR013757">
    <property type="entry name" value="Topo_IIA_A_a_sf"/>
</dbReference>
<dbReference type="InterPro" id="IPR002205">
    <property type="entry name" value="Topo_IIA_dom_A"/>
</dbReference>
<dbReference type="InterPro" id="IPR005742">
    <property type="entry name" value="TopoIV_A_Gneg"/>
</dbReference>
<dbReference type="InterPro" id="IPR050220">
    <property type="entry name" value="Type_II_DNA_Topoisomerases"/>
</dbReference>
<dbReference type="NCBIfam" id="TIGR01062">
    <property type="entry name" value="parC_Gneg"/>
    <property type="match status" value="1"/>
</dbReference>
<dbReference type="NCBIfam" id="NF004044">
    <property type="entry name" value="PRK05561.1"/>
    <property type="match status" value="1"/>
</dbReference>
<dbReference type="PANTHER" id="PTHR43493">
    <property type="entry name" value="DNA GYRASE/TOPOISOMERASE SUBUNIT A"/>
    <property type="match status" value="1"/>
</dbReference>
<dbReference type="PANTHER" id="PTHR43493:SF1">
    <property type="entry name" value="DNA TOPOISOMERASE 4 SUBUNIT A"/>
    <property type="match status" value="1"/>
</dbReference>
<dbReference type="Pfam" id="PF03989">
    <property type="entry name" value="DNA_gyraseA_C"/>
    <property type="match status" value="2"/>
</dbReference>
<dbReference type="Pfam" id="PF00521">
    <property type="entry name" value="DNA_topoisoIV"/>
    <property type="match status" value="1"/>
</dbReference>
<dbReference type="SMART" id="SM00434">
    <property type="entry name" value="TOP4c"/>
    <property type="match status" value="1"/>
</dbReference>
<dbReference type="SUPFAM" id="SSF101904">
    <property type="entry name" value="GyrA/ParC C-terminal domain-like"/>
    <property type="match status" value="1"/>
</dbReference>
<dbReference type="SUPFAM" id="SSF56719">
    <property type="entry name" value="Type II DNA topoisomerase"/>
    <property type="match status" value="1"/>
</dbReference>
<dbReference type="PROSITE" id="PS52040">
    <property type="entry name" value="TOPO_IIA"/>
    <property type="match status" value="1"/>
</dbReference>